<proteinExistence type="evidence at protein level"/>
<protein>
    <recommendedName>
        <fullName evidence="1">Non-structural protein 3</fullName>
        <shortName evidence="1">NSP3</shortName>
    </recommendedName>
    <alternativeName>
        <fullName evidence="1">NCVP4</fullName>
    </alternativeName>
    <alternativeName>
        <fullName evidence="1">Non-structural RNA-binding protein 34</fullName>
        <shortName evidence="1">NS34</shortName>
    </alternativeName>
</protein>
<keyword id="KW-0002">3D-structure</keyword>
<keyword id="KW-0175">Coiled coil</keyword>
<keyword id="KW-1035">Host cytoplasm</keyword>
<keyword id="KW-0945">Host-virus interaction</keyword>
<keyword id="KW-1185">Reference proteome</keyword>
<keyword id="KW-0694">RNA-binding</keyword>
<keyword id="KW-0810">Translation regulation</keyword>
<feature type="chain" id="PRO_0000149541" description="Non-structural protein 3">
    <location>
        <begin position="1"/>
        <end position="315"/>
    </location>
</feature>
<feature type="region of interest" description="RNA-binding" evidence="1">
    <location>
        <begin position="1"/>
        <end position="149"/>
    </location>
</feature>
<feature type="region of interest" description="Dimerization" evidence="1">
    <location>
        <begin position="150"/>
        <end position="206"/>
    </location>
</feature>
<feature type="region of interest" description="Interaction with host ZC3H7B" evidence="1">
    <location>
        <begin position="170"/>
        <end position="234"/>
    </location>
</feature>
<feature type="region of interest" description="Interaction with host EIF4G1" evidence="1">
    <location>
        <begin position="208"/>
        <end position="315"/>
    </location>
</feature>
<feature type="coiled-coil region" evidence="1">
    <location>
        <begin position="166"/>
        <end position="237"/>
    </location>
</feature>
<feature type="helix" evidence="2">
    <location>
        <begin position="8"/>
        <end position="32"/>
    </location>
</feature>
<feature type="helix" evidence="2">
    <location>
        <begin position="39"/>
        <end position="56"/>
    </location>
</feature>
<feature type="helix" evidence="2">
    <location>
        <begin position="61"/>
        <end position="74"/>
    </location>
</feature>
<feature type="helix" evidence="2">
    <location>
        <begin position="79"/>
        <end position="89"/>
    </location>
</feature>
<feature type="helix" evidence="2">
    <location>
        <begin position="93"/>
        <end position="107"/>
    </location>
</feature>
<feature type="helix" evidence="2">
    <location>
        <begin position="114"/>
        <end position="123"/>
    </location>
</feature>
<feature type="strand" evidence="2">
    <location>
        <begin position="125"/>
        <end position="127"/>
    </location>
</feature>
<feature type="strand" evidence="2">
    <location>
        <begin position="136"/>
        <end position="138"/>
    </location>
</feature>
<feature type="helix" evidence="2">
    <location>
        <begin position="141"/>
        <end position="147"/>
    </location>
</feature>
<feature type="strand" evidence="2">
    <location>
        <begin position="152"/>
        <end position="155"/>
    </location>
</feature>
<feature type="helix" evidence="2">
    <location>
        <begin position="156"/>
        <end position="161"/>
    </location>
</feature>
<feature type="helix" evidence="3">
    <location>
        <begin position="209"/>
        <end position="211"/>
    </location>
</feature>
<feature type="helix" evidence="3">
    <location>
        <begin position="212"/>
        <end position="250"/>
    </location>
</feature>
<feature type="helix" evidence="3">
    <location>
        <begin position="256"/>
        <end position="266"/>
    </location>
</feature>
<feature type="helix" evidence="3">
    <location>
        <begin position="274"/>
        <end position="303"/>
    </location>
</feature>
<feature type="turn" evidence="3">
    <location>
        <begin position="304"/>
        <end position="307"/>
    </location>
</feature>
<feature type="strand" evidence="3">
    <location>
        <begin position="309"/>
        <end position="311"/>
    </location>
</feature>
<comment type="function">
    <text evidence="1">Plays an important role in stimulating the translation of viral mRNAs. These mRNAs are capped but not polyadenylated, instead terminating in a conserved sequence 'GACC' at the 3' that is recognized by NSP3, which competes with host PABPC1 for EIF4G1 binding. The interaction between NSP3 and host EIF4G1 stabilizes the EIF4E-EIF4G1 interaction, thereby facilitating the initiation of capped mRNA translation.</text>
</comment>
<comment type="subunit">
    <text evidence="1">Homodimer. Interacts (via the coiled-coil region) with host ZC3H7B (via LD motif). Interacts with host EIF4G1.</text>
</comment>
<comment type="subcellular location">
    <subcellularLocation>
        <location evidence="1">Host cytoplasm</location>
    </subcellularLocation>
</comment>
<comment type="similarity">
    <text evidence="1">Belongs to the rotavirus NSP3 family.</text>
</comment>
<reference key="1">
    <citation type="journal article" date="1984" name="Nucleic Acids Res.">
        <title>Nucleotide sequence of the dsRNA genomic segment 7 of Simian 11 rotavirus.</title>
        <authorList>
            <person name="Both G.W."/>
            <person name="Bellamy A.R."/>
            <person name="Siegman L.J."/>
        </authorList>
    </citation>
    <scope>NUCLEOTIDE SEQUENCE [GENOMIC RNA]</scope>
</reference>
<reference key="2">
    <citation type="journal article" date="2002" name="Cell">
        <title>Recognition of the rotavirus mRNA 3' consensus by an asymmetric NSP3 homodimer.</title>
        <authorList>
            <person name="Deo R.C."/>
            <person name="Groft C.M."/>
            <person name="Rajashankar K.R."/>
            <person name="Burley S.K."/>
        </authorList>
    </citation>
    <scope>X-RAY CRYSTALLOGRAPHY (2.45 ANGSTROMS) OF 4-164</scope>
    <scope>RNA-BINDING</scope>
</reference>
<reference key="3">
    <citation type="journal article" date="2002" name="Mol. Cell">
        <title>Recognition of eIF4G by rotavirus NSP3 reveals a basis for mRNA circularization.</title>
        <authorList>
            <person name="Groft C.M."/>
            <person name="Burley S.K."/>
        </authorList>
    </citation>
    <scope>X-RAY CRYSTALLOGRAPHY (2.38 ANGSTROMS) OF 206-315</scope>
</reference>
<accession>P03536</accession>
<dbReference type="EMBL" id="X00355">
    <property type="protein sequence ID" value="CAA25102.1"/>
    <property type="molecule type" value="Genomic_RNA"/>
</dbReference>
<dbReference type="PIR" id="A04142">
    <property type="entry name" value="MNXR4S"/>
</dbReference>
<dbReference type="PDB" id="1KNZ">
    <property type="method" value="X-ray"/>
    <property type="resolution" value="2.45 A"/>
    <property type="chains" value="A/B/C/D/I/J/M/N=4-164"/>
</dbReference>
<dbReference type="PDB" id="1LJ2">
    <property type="method" value="X-ray"/>
    <property type="resolution" value="2.38 A"/>
    <property type="chains" value="A/B=206-315"/>
</dbReference>
<dbReference type="PDBsum" id="1KNZ"/>
<dbReference type="PDBsum" id="1LJ2"/>
<dbReference type="SMR" id="P03536"/>
<dbReference type="IntAct" id="P03536">
    <property type="interactions" value="1"/>
</dbReference>
<dbReference type="EvolutionaryTrace" id="P03536"/>
<dbReference type="Proteomes" id="UP000007180">
    <property type="component" value="Genome"/>
</dbReference>
<dbReference type="GO" id="GO:0030430">
    <property type="term" value="C:host cell cytoplasm"/>
    <property type="evidence" value="ECO:0007669"/>
    <property type="project" value="UniProtKB-SubCell"/>
</dbReference>
<dbReference type="GO" id="GO:0003723">
    <property type="term" value="F:RNA binding"/>
    <property type="evidence" value="ECO:0007669"/>
    <property type="project" value="UniProtKB-UniRule"/>
</dbReference>
<dbReference type="GO" id="GO:0006417">
    <property type="term" value="P:regulation of translation"/>
    <property type="evidence" value="ECO:0007669"/>
    <property type="project" value="UniProtKB-UniRule"/>
</dbReference>
<dbReference type="CDD" id="cd20714">
    <property type="entry name" value="NSP3_rotavirus"/>
    <property type="match status" value="1"/>
</dbReference>
<dbReference type="Gene3D" id="3.30.70.1610">
    <property type="match status" value="1"/>
</dbReference>
<dbReference type="Gene3D" id="1.20.5.970">
    <property type="entry name" value="Nonstructural RNA-binding protein"/>
    <property type="match status" value="1"/>
</dbReference>
<dbReference type="Gene3D" id="6.10.280.20">
    <property type="entry name" value="Rotavirus non-structural protein NSP3, N-terminal domain"/>
    <property type="match status" value="1"/>
</dbReference>
<dbReference type="HAMAP" id="MF_04094">
    <property type="entry name" value="ROTA_A_NSP3"/>
    <property type="match status" value="1"/>
</dbReference>
<dbReference type="HAMAP" id="MF_04090">
    <property type="entry name" value="ROTA_NSP3"/>
    <property type="match status" value="1"/>
</dbReference>
<dbReference type="InterPro" id="IPR042519">
    <property type="entry name" value="NSP3_N_rotavirus"/>
</dbReference>
<dbReference type="InterPro" id="IPR036082">
    <property type="entry name" value="NSP3_sf"/>
</dbReference>
<dbReference type="InterPro" id="IPR002873">
    <property type="entry name" value="Rotavirus_NSP3"/>
</dbReference>
<dbReference type="Pfam" id="PF01665">
    <property type="entry name" value="Rota_NSP3"/>
    <property type="match status" value="1"/>
</dbReference>
<dbReference type="SUPFAM" id="SSF69903">
    <property type="entry name" value="NSP3 homodimer"/>
    <property type="match status" value="1"/>
</dbReference>
<dbReference type="SUPFAM" id="SSF58030">
    <property type="entry name" value="Rotavirus nonstructural proteins"/>
    <property type="match status" value="1"/>
</dbReference>
<evidence type="ECO:0000255" key="1">
    <source>
        <dbReference type="HAMAP-Rule" id="MF_04094"/>
    </source>
</evidence>
<evidence type="ECO:0007829" key="2">
    <source>
        <dbReference type="PDB" id="1KNZ"/>
    </source>
</evidence>
<evidence type="ECO:0007829" key="3">
    <source>
        <dbReference type="PDB" id="1LJ2"/>
    </source>
</evidence>
<organismHost>
    <name type="scientific">Macaca mulatta</name>
    <name type="common">Rhesus macaque</name>
    <dbReference type="NCBI Taxonomy" id="9544"/>
</organismHost>
<organism>
    <name type="scientific">Rotavirus A (strain RVA/SA11-Both/G3P5B[2])</name>
    <name type="common">RV-A</name>
    <name type="synonym">Simian Agent 11 (strain Both)</name>
    <dbReference type="NCBI Taxonomy" id="37137"/>
    <lineage>
        <taxon>Viruses</taxon>
        <taxon>Riboviria</taxon>
        <taxon>Orthornavirae</taxon>
        <taxon>Duplornaviricota</taxon>
        <taxon>Resentoviricetes</taxon>
        <taxon>Reovirales</taxon>
        <taxon>Sedoreoviridae</taxon>
        <taxon>Rotavirus</taxon>
        <taxon>Rotavirus A</taxon>
    </lineage>
</organism>
<sequence length="315" mass="36445">MLKMESTQQMAVSIINSSFEAAVVAATSALENMGIEYDYQDIYSRVKNKFDFVMDDSGVKNNPIGKAITIDQALNNKFGSAIRNRNWLADTSRPAKLDEDVNKLRMMLSSKGIDQKMRVLNACFSVKRIPGKSSSIIKCTKLMRDKLERGEVEVDDSFVDEKMEVDTIDWKSRYEQLEQRFESLKSRVNEKYNNWVLKARKMNENMHSLQNVIPQQQAHIAELQVYNNKLERDLQNKIGSLTSSIEWYLRSMELDPEIKADIEQQINSIDAINPLHAFDDLESVIRNLISDYDKLFLMFKGLIQRCNYQYSFGCE</sequence>
<name>NSP3_ROTS1</name>